<protein>
    <recommendedName>
        <fullName>Entry-fusion complex protein OPG076</fullName>
        <shortName>EFC protein OPG076</shortName>
    </recommendedName>
    <alternativeName>
        <fullName>Protein O3</fullName>
    </alternativeName>
</protein>
<gene>
    <name type="primary">OPG076</name>
    <name type="ORF">O3L</name>
</gene>
<dbReference type="EMBL" id="X67119">
    <property type="status" value="NOT_ANNOTATED_CDS"/>
    <property type="molecule type" value="Genomic_DNA"/>
</dbReference>
<dbReference type="EMBL" id="X69198">
    <property type="status" value="NOT_ANNOTATED_CDS"/>
    <property type="molecule type" value="Genomic_DNA"/>
</dbReference>
<dbReference type="SMR" id="P0CK23"/>
<dbReference type="Proteomes" id="UP000002060">
    <property type="component" value="Segment"/>
</dbReference>
<dbReference type="GO" id="GO:0016020">
    <property type="term" value="C:membrane"/>
    <property type="evidence" value="ECO:0007669"/>
    <property type="project" value="UniProtKB-KW"/>
</dbReference>
<dbReference type="GO" id="GO:0019031">
    <property type="term" value="C:viral envelope"/>
    <property type="evidence" value="ECO:0007669"/>
    <property type="project" value="UniProtKB-KW"/>
</dbReference>
<dbReference type="GO" id="GO:0055036">
    <property type="term" value="C:virion membrane"/>
    <property type="evidence" value="ECO:0007669"/>
    <property type="project" value="UniProtKB-SubCell"/>
</dbReference>
<dbReference type="GO" id="GO:0046718">
    <property type="term" value="P:symbiont entry into host cell"/>
    <property type="evidence" value="ECO:0007669"/>
    <property type="project" value="UniProtKB-KW"/>
</dbReference>
<evidence type="ECO:0000250" key="1">
    <source>
        <dbReference type="UniProtKB" id="P0CK21"/>
    </source>
</evidence>
<evidence type="ECO:0000255" key="2"/>
<evidence type="ECO:0000305" key="3"/>
<feature type="chain" id="PRO_0000411968" description="Entry-fusion complex protein OPG076">
    <location>
        <begin position="1"/>
        <end position="40"/>
    </location>
</feature>
<feature type="transmembrane region" description="Helical" evidence="2">
    <location>
        <begin position="2"/>
        <end position="22"/>
    </location>
</feature>
<feature type="topological domain" description="Virion surface" evidence="2">
    <location>
        <begin position="23"/>
        <end position="40"/>
    </location>
</feature>
<organism>
    <name type="scientific">Variola virus (isolate Human/India/Ind3/1967)</name>
    <name type="common">VARV</name>
    <name type="synonym">Smallpox virus</name>
    <dbReference type="NCBI Taxonomy" id="587200"/>
    <lineage>
        <taxon>Viruses</taxon>
        <taxon>Varidnaviria</taxon>
        <taxon>Bamfordvirae</taxon>
        <taxon>Nucleocytoviricota</taxon>
        <taxon>Pokkesviricetes</taxon>
        <taxon>Chitovirales</taxon>
        <taxon>Poxviridae</taxon>
        <taxon>Chordopoxvirinae</taxon>
        <taxon>Orthopoxvirus</taxon>
        <taxon>Variola virus</taxon>
    </lineage>
</organism>
<reference key="1">
    <citation type="journal article" date="1993" name="Virus Res.">
        <title>Nucleotide sequence analysis of variola virus HindIII M, L, I genome fragments.</title>
        <authorList>
            <person name="Shchelkunov S.N."/>
            <person name="Blinov V.M."/>
            <person name="Totmenin A.V."/>
            <person name="Marennikova S.S."/>
            <person name="Kolykhalov A.A."/>
            <person name="Frolov I.V."/>
            <person name="Chizhikov V.E."/>
            <person name="Gytorov V.V."/>
            <person name="Gashikov P.V."/>
            <person name="Belanov E.F."/>
            <person name="Belavin P.A."/>
            <person name="Resenchuk S.M."/>
            <person name="Andzhaparidze O.G."/>
            <person name="Sandakhchiev L.S."/>
        </authorList>
    </citation>
    <scope>NUCLEOTIDE SEQUENCE [GENOMIC DNA]</scope>
</reference>
<reference key="2">
    <citation type="journal article" date="1993" name="FEBS Lett.">
        <title>Genes of variola and vaccinia viruses necessary to overcome the host protective mechanisms.</title>
        <authorList>
            <person name="Shchelkunov S.N."/>
            <person name="Blinov V.M."/>
            <person name="Sandakhchiev L.S."/>
        </authorList>
    </citation>
    <scope>NUCLEOTIDE SEQUENCE [LARGE SCALE GENOMIC DNA]</scope>
</reference>
<sequence length="40" mass="4882">MLVVIMFFIAFAFCSWLSYSYLRPYISTKELNKSRMFYIT</sequence>
<comment type="function">
    <text evidence="1">Component of the entry fusion complex (EFC), which consists of 11 proteins. During cell infection, this complex mediates entry of the virion core into the host cytoplasm by a two-step mechanism consisting of lipid mixing of the viral and cellular membranes and subsequent pore formation.</text>
</comment>
<comment type="subunit">
    <text evidence="1">Component of the entry fusion complex (EFC) composed of OPG053, OPG076, OPG086, OPG094, OPG095, OPG099, OPG107, OPG143, OPG104, OPG147 and OPG155. Except for OPG095 and OPG053, each of the EFC proteins is required for assembly or stability of the complex.</text>
</comment>
<comment type="subcellular location">
    <subcellularLocation>
        <location evidence="1">Virion membrane</location>
        <topology evidence="1">Single-pass membrane protein</topology>
    </subcellularLocation>
    <text evidence="1">Localizes in cytoplasmic virus factories. Component of the membrane of the mature virion.</text>
</comment>
<comment type="induction">
    <text evidence="1">Expressed in the intermediate phase of the viral replicative cycle.</text>
</comment>
<comment type="PTM">
    <text evidence="1">Unglycosylated because produced in viral factories instead of the classic ER -Golgi route.</text>
</comment>
<comment type="similarity">
    <text evidence="3">Belongs to the orthopoxvirus OPG076 family.</text>
</comment>
<organismHost>
    <name type="scientific">Homo sapiens</name>
    <name type="common">Human</name>
    <dbReference type="NCBI Taxonomy" id="9606"/>
</organismHost>
<keyword id="KW-0426">Late protein</keyword>
<keyword id="KW-0472">Membrane</keyword>
<keyword id="KW-1185">Reference proteome</keyword>
<keyword id="KW-0812">Transmembrane</keyword>
<keyword id="KW-1133">Transmembrane helix</keyword>
<keyword id="KW-0261">Viral envelope protein</keyword>
<keyword id="KW-1162">Viral penetration into host cytoplasm</keyword>
<keyword id="KW-0946">Virion</keyword>
<keyword id="KW-1160">Virus entry into host cell</keyword>
<accession>P0CK23</accession>
<proteinExistence type="inferred from homology"/>
<name>PG076_VAR67</name>